<proteinExistence type="inferred from homology"/>
<protein>
    <recommendedName>
        <fullName evidence="1">Small ribosomal subunit protein bS18</fullName>
    </recommendedName>
    <alternativeName>
        <fullName evidence="3">30S ribosomal protein S18</fullName>
    </alternativeName>
</protein>
<reference key="1">
    <citation type="submission" date="2009-03" db="EMBL/GenBank/DDBJ databases">
        <title>Brucella melitensis ATCC 23457 whole genome shotgun sequencing project.</title>
        <authorList>
            <person name="Setubal J.C."/>
            <person name="Boyle S."/>
            <person name="Crasta O.R."/>
            <person name="Gillespie J.J."/>
            <person name="Kenyon R.W."/>
            <person name="Lu J."/>
            <person name="Mane S."/>
            <person name="Nagrani S."/>
            <person name="Shallom J.M."/>
            <person name="Shallom S."/>
            <person name="Shukla M."/>
            <person name="Snyder E.E."/>
            <person name="Sobral B.W."/>
            <person name="Wattam A.R."/>
            <person name="Will R."/>
            <person name="Williams K."/>
            <person name="Yoo H."/>
            <person name="Munk C."/>
            <person name="Tapia R."/>
            <person name="Han C."/>
            <person name="Detter J.C."/>
            <person name="Bruce D."/>
            <person name="Brettin T.S."/>
        </authorList>
    </citation>
    <scope>NUCLEOTIDE SEQUENCE [LARGE SCALE GENOMIC DNA]</scope>
    <source>
        <strain>ATCC 23457</strain>
    </source>
</reference>
<accession>C0RHG1</accession>
<feature type="chain" id="PRO_1000125787" description="Small ribosomal subunit protein bS18">
    <location>
        <begin position="1"/>
        <end position="82"/>
    </location>
</feature>
<feature type="region of interest" description="Disordered" evidence="2">
    <location>
        <begin position="1"/>
        <end position="20"/>
    </location>
</feature>
<evidence type="ECO:0000255" key="1">
    <source>
        <dbReference type="HAMAP-Rule" id="MF_00270"/>
    </source>
</evidence>
<evidence type="ECO:0000256" key="2">
    <source>
        <dbReference type="SAM" id="MobiDB-lite"/>
    </source>
</evidence>
<evidence type="ECO:0000305" key="3"/>
<gene>
    <name evidence="1" type="primary">rpsR</name>
    <name type="ordered locus">BMEA_A0488</name>
</gene>
<name>RS18_BRUMB</name>
<sequence length="82" mass="9562">MVDINQIPTRRPFHRRRKTCPFSGANAPKIDYKDVKLLQRYISERGKIVPSRITAVSQKKQRELAKAIKRARFLGLLPYVVK</sequence>
<comment type="function">
    <text evidence="1">Binds as a heterodimer with protein bS6 to the central domain of the 16S rRNA, where it helps stabilize the platform of the 30S subunit.</text>
</comment>
<comment type="subunit">
    <text evidence="1">Part of the 30S ribosomal subunit. Forms a tight heterodimer with protein bS6.</text>
</comment>
<comment type="similarity">
    <text evidence="1">Belongs to the bacterial ribosomal protein bS18 family.</text>
</comment>
<keyword id="KW-0687">Ribonucleoprotein</keyword>
<keyword id="KW-0689">Ribosomal protein</keyword>
<keyword id="KW-0694">RNA-binding</keyword>
<keyword id="KW-0699">rRNA-binding</keyword>
<dbReference type="EMBL" id="CP001488">
    <property type="protein sequence ID" value="ACO00269.1"/>
    <property type="molecule type" value="Genomic_DNA"/>
</dbReference>
<dbReference type="RefSeq" id="WP_002963610.1">
    <property type="nucleotide sequence ID" value="NC_012441.1"/>
</dbReference>
<dbReference type="SMR" id="C0RHG1"/>
<dbReference type="GeneID" id="97914641"/>
<dbReference type="KEGG" id="bmi:BMEA_A0488"/>
<dbReference type="HOGENOM" id="CLU_148710_2_2_5"/>
<dbReference type="Proteomes" id="UP000001748">
    <property type="component" value="Chromosome I"/>
</dbReference>
<dbReference type="GO" id="GO:0022627">
    <property type="term" value="C:cytosolic small ribosomal subunit"/>
    <property type="evidence" value="ECO:0007669"/>
    <property type="project" value="TreeGrafter"/>
</dbReference>
<dbReference type="GO" id="GO:0070181">
    <property type="term" value="F:small ribosomal subunit rRNA binding"/>
    <property type="evidence" value="ECO:0007669"/>
    <property type="project" value="TreeGrafter"/>
</dbReference>
<dbReference type="GO" id="GO:0003735">
    <property type="term" value="F:structural constituent of ribosome"/>
    <property type="evidence" value="ECO:0007669"/>
    <property type="project" value="InterPro"/>
</dbReference>
<dbReference type="GO" id="GO:0006412">
    <property type="term" value="P:translation"/>
    <property type="evidence" value="ECO:0007669"/>
    <property type="project" value="UniProtKB-UniRule"/>
</dbReference>
<dbReference type="Gene3D" id="4.10.640.10">
    <property type="entry name" value="Ribosomal protein S18"/>
    <property type="match status" value="1"/>
</dbReference>
<dbReference type="HAMAP" id="MF_00270">
    <property type="entry name" value="Ribosomal_bS18"/>
    <property type="match status" value="1"/>
</dbReference>
<dbReference type="InterPro" id="IPR001648">
    <property type="entry name" value="Ribosomal_bS18"/>
</dbReference>
<dbReference type="InterPro" id="IPR018275">
    <property type="entry name" value="Ribosomal_bS18_CS"/>
</dbReference>
<dbReference type="InterPro" id="IPR036870">
    <property type="entry name" value="Ribosomal_bS18_sf"/>
</dbReference>
<dbReference type="NCBIfam" id="TIGR00165">
    <property type="entry name" value="S18"/>
    <property type="match status" value="1"/>
</dbReference>
<dbReference type="PANTHER" id="PTHR13479">
    <property type="entry name" value="30S RIBOSOMAL PROTEIN S18"/>
    <property type="match status" value="1"/>
</dbReference>
<dbReference type="PANTHER" id="PTHR13479:SF40">
    <property type="entry name" value="SMALL RIBOSOMAL SUBUNIT PROTEIN BS18M"/>
    <property type="match status" value="1"/>
</dbReference>
<dbReference type="Pfam" id="PF01084">
    <property type="entry name" value="Ribosomal_S18"/>
    <property type="match status" value="1"/>
</dbReference>
<dbReference type="PRINTS" id="PR00974">
    <property type="entry name" value="RIBOSOMALS18"/>
</dbReference>
<dbReference type="SUPFAM" id="SSF46911">
    <property type="entry name" value="Ribosomal protein S18"/>
    <property type="match status" value="1"/>
</dbReference>
<dbReference type="PROSITE" id="PS00057">
    <property type="entry name" value="RIBOSOMAL_S18"/>
    <property type="match status" value="1"/>
</dbReference>
<organism>
    <name type="scientific">Brucella melitensis biotype 2 (strain ATCC 23457)</name>
    <dbReference type="NCBI Taxonomy" id="546272"/>
    <lineage>
        <taxon>Bacteria</taxon>
        <taxon>Pseudomonadati</taxon>
        <taxon>Pseudomonadota</taxon>
        <taxon>Alphaproteobacteria</taxon>
        <taxon>Hyphomicrobiales</taxon>
        <taxon>Brucellaceae</taxon>
        <taxon>Brucella/Ochrobactrum group</taxon>
        <taxon>Brucella</taxon>
    </lineage>
</organism>